<accession>P41355</accession>
<name>HEMA_RINDR</name>
<reference key="1">
    <citation type="journal article" date="1995" name="J. Gen. Virol.">
        <title>Sequencing and analysis of the nucleocapsid (N) and polymerase (L) genes and the terminal extragenic domains of the vaccine strain of rinderpest virus.</title>
        <authorList>
            <person name="Baron M.D."/>
            <person name="Barrett T."/>
        </authorList>
    </citation>
    <scope>NUCLEOTIDE SEQUENCE [GENOMIC RNA]</scope>
</reference>
<reference key="2">
    <citation type="journal article" date="1998" name="J. Virol.">
        <title>Morbillivirus downregulation of CD46.</title>
        <authorList>
            <person name="Galbraith S.E."/>
            <person name="Tiwari A."/>
            <person name="Baron M.D."/>
            <person name="Lund B.T."/>
            <person name="Barrett T."/>
            <person name="Cosby S.L."/>
        </authorList>
    </citation>
    <scope>FUNCTION</scope>
</reference>
<organismHost>
    <name type="scientific">Bos indicus</name>
    <name type="common">Zebu</name>
    <dbReference type="NCBI Taxonomy" id="9915"/>
</organismHost>
<organismHost>
    <name type="scientific">Bos taurus</name>
    <name type="common">Bovine</name>
    <dbReference type="NCBI Taxonomy" id="9913"/>
</organismHost>
<organismHost>
    <name type="scientific">Bubalus bubalis</name>
    <name type="common">Domestic water buffalo</name>
    <dbReference type="NCBI Taxonomy" id="89462"/>
</organismHost>
<organismHost>
    <name type="scientific">Capra hircus</name>
    <name type="common">Goat</name>
    <dbReference type="NCBI Taxonomy" id="9925"/>
</organismHost>
<organismHost>
    <name type="scientific">Gazella</name>
    <name type="common">gazelles</name>
    <dbReference type="NCBI Taxonomy" id="9933"/>
</organismHost>
<organismHost>
    <name type="scientific">Giraffa camelopardalis</name>
    <name type="common">Giraffe</name>
    <dbReference type="NCBI Taxonomy" id="9894"/>
</organismHost>
<organismHost>
    <name type="scientific">Hippopotamus</name>
    <dbReference type="NCBI Taxonomy" id="9832"/>
</organismHost>
<organismHost>
    <name type="scientific">Ovis aries</name>
    <name type="common">Sheep</name>
    <dbReference type="NCBI Taxonomy" id="9940"/>
</organismHost>
<organismHost>
    <name type="scientific">Suidae</name>
    <name type="common">pigs</name>
    <dbReference type="NCBI Taxonomy" id="9821"/>
</organismHost>
<sequence>MSPPRDRVDAYYKDNFQFKNTRVVLNKEQLLIERPCMLLTVLFVMFLSLVGLLAIAGIRLHRAAVNTAKINNDLTTSIDITKSIEYQVKDVLTPLFKIIGDEVGLRTPQRFTDLTKFISDKIKFLNPDKEYDFRDINWCINPPERIKIDYDQYCAHTAAEDLITMLVNSSLTGTTVPRTSLVNLGRNCTGPTTTKGQFSNISLTLSGIYSGRGYNISSMITITGKGMYGSTYLVGKYNQRARRPSKVWHQDYRVFEVGIIRELGVGTPGFHMTNYLELPRQPELETCMLALGESKLAALCLADSPVALHYGRVGDDNKIRFVKLGVWASPADRDTLATLSAIDPTLDGLYITTHRGIIAAGTAIWAVPVTRTDDQVKMGKCRLEACRDRPPPFCNSTDWEPLEAGRIPAYGVLTIKLGLADEPKVDIISEFGPLITHDSGMDLYTSFDGTKYWLTTPPLQNSALGTVNTLVLEPSLKISPNILTLPIRSGGGDCYIPTYLSDRADDDVKLSSNLVILPSRDLQYVSATYDISRVEHAIVYHIYSTGRLSSYYYPFKLPIKGDPVSLQIECFPWDRKLWCHHFCSVVDSGTGEQVTHIGVVGIKITCNGK</sequence>
<comment type="function">
    <text evidence="1 3">Attaches the virus to cell receptors and thereby initiating infection. Binding of H protein to the receptor induces a conformational change that allows the F protein to trigger virion/cell membranes fusion (By similarity). Down-regulates human MCP/CD46 cell surface expression.</text>
</comment>
<comment type="subcellular location">
    <subcellularLocation>
        <location evidence="4">Virion membrane</location>
        <topology evidence="4">Single-pass type II membrane protein</topology>
    </subcellularLocation>
    <subcellularLocation>
        <location>Host membrane</location>
        <topology>Single-pass type II membrane protein</topology>
    </subcellularLocation>
</comment>
<comment type="similarity">
    <text evidence="4">Belongs to the paramyxoviruses hemagglutinin-neuraminidase family. Non-sialidase subfamily.</text>
</comment>
<comment type="caution">
    <text evidence="4">Morbiliviruses hemagglutinins have no neuraminidase activity.</text>
</comment>
<organism>
    <name type="scientific">Rinderpest virus (strain RBOK)</name>
    <name type="common">RDV</name>
    <dbReference type="NCBI Taxonomy" id="36409"/>
    <lineage>
        <taxon>Viruses</taxon>
        <taxon>Riboviria</taxon>
        <taxon>Orthornavirae</taxon>
        <taxon>Negarnaviricota</taxon>
        <taxon>Haploviricotina</taxon>
        <taxon>Monjiviricetes</taxon>
        <taxon>Mononegavirales</taxon>
        <taxon>Paramyxoviridae</taxon>
        <taxon>Orthoparamyxovirinae</taxon>
        <taxon>Morbillivirus</taxon>
        <taxon>Morbillivirus pecoris</taxon>
        <taxon>Rinderpest morbillivirus</taxon>
    </lineage>
</organism>
<gene>
    <name type="primary">H</name>
</gene>
<proteinExistence type="evidence at protein level"/>
<keyword id="KW-0002">3D-structure</keyword>
<keyword id="KW-0325">Glycoprotein</keyword>
<keyword id="KW-0348">Hemagglutinin</keyword>
<keyword id="KW-1043">Host membrane</keyword>
<keyword id="KW-0945">Host-virus interaction</keyword>
<keyword id="KW-0472">Membrane</keyword>
<keyword id="KW-1185">Reference proteome</keyword>
<keyword id="KW-0735">Signal-anchor</keyword>
<keyword id="KW-0812">Transmembrane</keyword>
<keyword id="KW-1133">Transmembrane helix</keyword>
<keyword id="KW-1161">Viral attachment to host cell</keyword>
<keyword id="KW-0261">Viral envelope protein</keyword>
<keyword id="KW-0946">Virion</keyword>
<keyword id="KW-1160">Virus entry into host cell</keyword>
<dbReference type="EMBL" id="Z30697">
    <property type="protein sequence ID" value="CAA83182.1"/>
    <property type="molecule type" value="Genomic_RNA"/>
</dbReference>
<dbReference type="PIR" id="S43009">
    <property type="entry name" value="S43009"/>
</dbReference>
<dbReference type="PDB" id="3PWU">
    <property type="method" value="X-ray"/>
    <property type="resolution" value="1.90 A"/>
    <property type="chains" value="C=407-415"/>
</dbReference>
<dbReference type="PDBsum" id="3PWU"/>
<dbReference type="SMR" id="P41355"/>
<dbReference type="GlyCosmos" id="P41355">
    <property type="glycosylation" value="5 sites, No reported glycans"/>
</dbReference>
<dbReference type="EvolutionaryTrace" id="P41355"/>
<dbReference type="Proteomes" id="UP000008654">
    <property type="component" value="Genome"/>
</dbReference>
<dbReference type="GO" id="GO:0033644">
    <property type="term" value="C:host cell membrane"/>
    <property type="evidence" value="ECO:0007669"/>
    <property type="project" value="UniProtKB-SubCell"/>
</dbReference>
<dbReference type="GO" id="GO:0016020">
    <property type="term" value="C:membrane"/>
    <property type="evidence" value="ECO:0007669"/>
    <property type="project" value="UniProtKB-KW"/>
</dbReference>
<dbReference type="GO" id="GO:0019031">
    <property type="term" value="C:viral envelope"/>
    <property type="evidence" value="ECO:0007669"/>
    <property type="project" value="UniProtKB-KW"/>
</dbReference>
<dbReference type="GO" id="GO:0055036">
    <property type="term" value="C:virion membrane"/>
    <property type="evidence" value="ECO:0007669"/>
    <property type="project" value="UniProtKB-SubCell"/>
</dbReference>
<dbReference type="GO" id="GO:0046789">
    <property type="term" value="F:host cell surface receptor binding"/>
    <property type="evidence" value="ECO:0007669"/>
    <property type="project" value="InterPro"/>
</dbReference>
<dbReference type="GO" id="GO:0046718">
    <property type="term" value="P:symbiont entry into host cell"/>
    <property type="evidence" value="ECO:0007669"/>
    <property type="project" value="UniProtKB-KW"/>
</dbReference>
<dbReference type="GO" id="GO:0019062">
    <property type="term" value="P:virion attachment to host cell"/>
    <property type="evidence" value="ECO:0007669"/>
    <property type="project" value="UniProtKB-KW"/>
</dbReference>
<dbReference type="CDD" id="cd15467">
    <property type="entry name" value="MV-h"/>
    <property type="match status" value="1"/>
</dbReference>
<dbReference type="Gene3D" id="2.120.10.10">
    <property type="match status" value="1"/>
</dbReference>
<dbReference type="InterPro" id="IPR000665">
    <property type="entry name" value="Hemagglutn/HN"/>
</dbReference>
<dbReference type="InterPro" id="IPR049617">
    <property type="entry name" value="MV-h_C"/>
</dbReference>
<dbReference type="InterPro" id="IPR036278">
    <property type="entry name" value="Sialidase_sf"/>
</dbReference>
<dbReference type="Pfam" id="PF00423">
    <property type="entry name" value="HN"/>
    <property type="match status" value="1"/>
</dbReference>
<dbReference type="SUPFAM" id="SSF50939">
    <property type="entry name" value="Sialidases"/>
    <property type="match status" value="1"/>
</dbReference>
<protein>
    <recommendedName>
        <fullName>Hemagglutinin glycoprotein</fullName>
    </recommendedName>
</protein>
<feature type="chain" id="PRO_0000142635" description="Hemagglutinin glycoprotein">
    <location>
        <begin position="1"/>
        <end position="609"/>
    </location>
</feature>
<feature type="topological domain" description="Intravirion" evidence="2">
    <location>
        <begin position="1"/>
        <end position="34"/>
    </location>
</feature>
<feature type="transmembrane region" description="Helical; Signal-anchor for type II membrane protein" evidence="2">
    <location>
        <begin position="35"/>
        <end position="58"/>
    </location>
</feature>
<feature type="topological domain" description="Virion surface" evidence="2">
    <location>
        <begin position="59"/>
        <end position="609"/>
    </location>
</feature>
<feature type="glycosylation site" description="N-linked (GlcNAc...) asparagine; by host" evidence="2">
    <location>
        <position position="168"/>
    </location>
</feature>
<feature type="glycosylation site" description="N-linked (GlcNAc...) asparagine; by host" evidence="2">
    <location>
        <position position="187"/>
    </location>
</feature>
<feature type="glycosylation site" description="N-linked (GlcNAc...) asparagine; by host" evidence="2">
    <location>
        <position position="200"/>
    </location>
</feature>
<feature type="glycosylation site" description="N-linked (GlcNAc...) asparagine; by host" evidence="2">
    <location>
        <position position="215"/>
    </location>
</feature>
<feature type="glycosylation site" description="N-linked (GlcNAc...) asparagine; by host" evidence="2">
    <location>
        <position position="395"/>
    </location>
</feature>
<evidence type="ECO:0000250" key="1"/>
<evidence type="ECO:0000255" key="2"/>
<evidence type="ECO:0000269" key="3">
    <source>
    </source>
</evidence>
<evidence type="ECO:0000305" key="4"/>